<proteinExistence type="evidence at protein level"/>
<accession>Q9X2W0</accession>
<name>MCJD_ECOLX</name>
<sequence length="580" mass="65425">MERKQKNSLFNYIYSLMDVRGKFLFFSMLFITSLSSIIISISPLILAKITDLLSGSLSNFSYEYLVLLACLYMFCVISNKASVFLFMILQSSLRINMQKKMSLKYLRELYNENITNLSKNNAGYTTQSLNQASNDIYILVRNVSQNILSPVIQLISTIVVVLSTKDWFSAGVFFLYILVFVIFNTRLTGSLASLRKHSMDITLNSYSLLSDTVDNMIAAKKNNALRLISERYEDALTQENNAQKKYWLLSSKVLLLNSLLAVILFGSVFIYNILGVLNGVVSIGHFIMITSYIILLSTPVENIGALLSEIRQSMSSLAGFIQRHAENKATSPSIPFLNMERKLNLSIRELSFSYSDDKKILNSVSLDLFTGKMYSLTGPSGSGKSTLVKIISGYYKNYFGDIYLNDISLRNISDEDLNDAIYYLTQDDYIFMDTLRFNLRLANYDASENEIFKVLKLANLSVVNNEPVSLDTHLINRGNNYSGGQKQRISLARLFLRKPAIIIIDEATSALDYINESEILSSIRTHFPDALIINISHRINLLECSDCVYVLNEGNIVASGHFRDLMVSNEYISGLASVTE</sequence>
<keyword id="KW-0002">3D-structure</keyword>
<keyword id="KW-0067">ATP-binding</keyword>
<keyword id="KW-0079">Bacteriocin immunity</keyword>
<keyword id="KW-0080">Bacteriocin transport</keyword>
<keyword id="KW-0997">Cell inner membrane</keyword>
<keyword id="KW-1003">Cell membrane</keyword>
<keyword id="KW-0472">Membrane</keyword>
<keyword id="KW-0547">Nucleotide-binding</keyword>
<keyword id="KW-0614">Plasmid</keyword>
<keyword id="KW-0653">Protein transport</keyword>
<keyword id="KW-0812">Transmembrane</keyword>
<keyword id="KW-1133">Transmembrane helix</keyword>
<keyword id="KW-0813">Transport</keyword>
<organism>
    <name type="scientific">Escherichia coli</name>
    <dbReference type="NCBI Taxonomy" id="562"/>
    <lineage>
        <taxon>Bacteria</taxon>
        <taxon>Pseudomonadati</taxon>
        <taxon>Pseudomonadota</taxon>
        <taxon>Gammaproteobacteria</taxon>
        <taxon>Enterobacterales</taxon>
        <taxon>Enterobacteriaceae</taxon>
        <taxon>Escherichia</taxon>
    </lineage>
</organism>
<feature type="chain" id="PRO_0000092491" description="Microcin-J25 export ATP-binding/permease protein McjD">
    <location>
        <begin position="1"/>
        <end position="580"/>
    </location>
</feature>
<feature type="transmembrane region" description="Helical" evidence="3">
    <location>
        <begin position="25"/>
        <end position="45"/>
    </location>
</feature>
<feature type="transmembrane region" description="Helical" evidence="3">
    <location>
        <begin position="66"/>
        <end position="86"/>
    </location>
</feature>
<feature type="transmembrane region" description="Helical" evidence="3">
    <location>
        <begin position="143"/>
        <end position="163"/>
    </location>
</feature>
<feature type="transmembrane region" description="Helical" evidence="3">
    <location>
        <begin position="167"/>
        <end position="187"/>
    </location>
</feature>
<feature type="transmembrane region" description="Helical" evidence="3">
    <location>
        <begin position="261"/>
        <end position="281"/>
    </location>
</feature>
<feature type="transmembrane region" description="Helical" evidence="3">
    <location>
        <begin position="286"/>
        <end position="306"/>
    </location>
</feature>
<feature type="domain" description="ABC transmembrane type-1" evidence="3">
    <location>
        <begin position="25"/>
        <end position="312"/>
    </location>
</feature>
<feature type="domain" description="ABC transporter" evidence="2">
    <location>
        <begin position="345"/>
        <end position="578"/>
    </location>
</feature>
<feature type="binding site" evidence="2">
    <location>
        <begin position="378"/>
        <end position="385"/>
    </location>
    <ligand>
        <name>ATP</name>
        <dbReference type="ChEBI" id="CHEBI:30616"/>
    </ligand>
</feature>
<feature type="helix" evidence="7">
    <location>
        <begin position="5"/>
        <end position="8"/>
    </location>
</feature>
<feature type="helix" evidence="7">
    <location>
        <begin position="10"/>
        <end position="15"/>
    </location>
</feature>
<feature type="helix" evidence="7">
    <location>
        <begin position="19"/>
        <end position="53"/>
    </location>
</feature>
<feature type="turn" evidence="8">
    <location>
        <begin position="54"/>
        <end position="56"/>
    </location>
</feature>
<feature type="helix" evidence="7">
    <location>
        <begin position="59"/>
        <end position="110"/>
    </location>
</feature>
<feature type="helix" evidence="7">
    <location>
        <begin position="114"/>
        <end position="117"/>
    </location>
</feature>
<feature type="helix" evidence="7">
    <location>
        <begin position="122"/>
        <end position="145"/>
    </location>
</feature>
<feature type="helix" evidence="7">
    <location>
        <begin position="148"/>
        <end position="163"/>
    </location>
</feature>
<feature type="helix" evidence="7">
    <location>
        <begin position="167"/>
        <end position="214"/>
    </location>
</feature>
<feature type="helix" evidence="7">
    <location>
        <begin position="216"/>
        <end position="221"/>
    </location>
</feature>
<feature type="helix" evidence="7">
    <location>
        <begin position="225"/>
        <end position="277"/>
    </location>
</feature>
<feature type="helix" evidence="7">
    <location>
        <begin position="283"/>
        <end position="322"/>
    </location>
</feature>
<feature type="turn" evidence="7">
    <location>
        <begin position="323"/>
        <end position="325"/>
    </location>
</feature>
<feature type="strand" evidence="7">
    <location>
        <begin position="345"/>
        <end position="368"/>
    </location>
</feature>
<feature type="strand" evidence="7">
    <location>
        <begin position="373"/>
        <end position="377"/>
    </location>
</feature>
<feature type="helix" evidence="7">
    <location>
        <begin position="384"/>
        <end position="391"/>
    </location>
</feature>
<feature type="strand" evidence="7">
    <location>
        <begin position="399"/>
        <end position="404"/>
    </location>
</feature>
<feature type="helix" evidence="7">
    <location>
        <begin position="409"/>
        <end position="411"/>
    </location>
</feature>
<feature type="helix" evidence="7">
    <location>
        <begin position="414"/>
        <end position="420"/>
    </location>
</feature>
<feature type="strand" evidence="7">
    <location>
        <begin position="421"/>
        <end position="424"/>
    </location>
</feature>
<feature type="strand" evidence="7">
    <location>
        <begin position="432"/>
        <end position="434"/>
    </location>
</feature>
<feature type="helix" evidence="7">
    <location>
        <begin position="435"/>
        <end position="440"/>
    </location>
</feature>
<feature type="helix" evidence="7">
    <location>
        <begin position="448"/>
        <end position="457"/>
    </location>
</feature>
<feature type="strand" evidence="7">
    <location>
        <begin position="461"/>
        <end position="463"/>
    </location>
</feature>
<feature type="helix" evidence="7">
    <location>
        <begin position="476"/>
        <end position="478"/>
    </location>
</feature>
<feature type="helix" evidence="7">
    <location>
        <begin position="483"/>
        <end position="496"/>
    </location>
</feature>
<feature type="strand" evidence="7">
    <location>
        <begin position="500"/>
        <end position="506"/>
    </location>
</feature>
<feature type="turn" evidence="7">
    <location>
        <begin position="507"/>
        <end position="510"/>
    </location>
</feature>
<feature type="helix" evidence="7">
    <location>
        <begin position="513"/>
        <end position="526"/>
    </location>
</feature>
<feature type="strand" evidence="8">
    <location>
        <begin position="527"/>
        <end position="529"/>
    </location>
</feature>
<feature type="strand" evidence="7">
    <location>
        <begin position="531"/>
        <end position="535"/>
    </location>
</feature>
<feature type="strand" evidence="7">
    <location>
        <begin position="537"/>
        <end position="539"/>
    </location>
</feature>
<feature type="turn" evidence="7">
    <location>
        <begin position="540"/>
        <end position="544"/>
    </location>
</feature>
<feature type="strand" evidence="7">
    <location>
        <begin position="545"/>
        <end position="552"/>
    </location>
</feature>
<feature type="strand" evidence="7">
    <location>
        <begin position="555"/>
        <end position="558"/>
    </location>
</feature>
<feature type="helix" evidence="7">
    <location>
        <begin position="565"/>
        <end position="568"/>
    </location>
</feature>
<feature type="helix" evidence="7">
    <location>
        <begin position="570"/>
        <end position="576"/>
    </location>
</feature>
<evidence type="ECO:0000250" key="1"/>
<evidence type="ECO:0000255" key="2">
    <source>
        <dbReference type="PROSITE-ProRule" id="PRU00434"/>
    </source>
</evidence>
<evidence type="ECO:0000255" key="3">
    <source>
        <dbReference type="PROSITE-ProRule" id="PRU00441"/>
    </source>
</evidence>
<evidence type="ECO:0000269" key="4">
    <source>
    </source>
</evidence>
<evidence type="ECO:0000269" key="5">
    <source>
    </source>
</evidence>
<evidence type="ECO:0000305" key="6"/>
<evidence type="ECO:0007829" key="7">
    <source>
        <dbReference type="PDB" id="4PL0"/>
    </source>
</evidence>
<evidence type="ECO:0007829" key="8">
    <source>
        <dbReference type="PDB" id="5OFR"/>
    </source>
</evidence>
<protein>
    <recommendedName>
        <fullName>Microcin-J25 export ATP-binding/permease protein McjD</fullName>
    </recommendedName>
    <alternativeName>
        <fullName>Microcin-J25 immunity protein</fullName>
    </alternativeName>
    <alternativeName>
        <fullName>Microcin-J25 secretion ATP-binding protein McjD</fullName>
    </alternativeName>
</protein>
<geneLocation type="plasmid">
    <name>pTUC100</name>
</geneLocation>
<comment type="function">
    <text evidence="4 5">Is able to protect a cell, which harbors the plasmid pTUC100 encoding microcin J25, against microcin J25. Is required for microcin J25 export out of the producing cells.</text>
</comment>
<comment type="subunit">
    <text evidence="1">Homodimer.</text>
</comment>
<comment type="subcellular location">
    <subcellularLocation>
        <location evidence="6">Cell inner membrane</location>
        <topology evidence="3">Multi-pass membrane protein</topology>
    </subcellularLocation>
</comment>
<comment type="similarity">
    <text evidence="6">Belongs to the ABC transporter superfamily.</text>
</comment>
<gene>
    <name type="primary">mcjD</name>
</gene>
<reference key="1">
    <citation type="journal article" date="1999" name="J. Bacteriol.">
        <title>Sequence analysis of the four plasmid genes required to produce the circular peptide antibiotic microcin J25.</title>
        <authorList>
            <person name="Solbiati J.O."/>
            <person name="Ciaccio M."/>
            <person name="Farias R.N."/>
            <person name="Gonzalez-Pastor J.E."/>
            <person name="Moreno F."/>
            <person name="Salomon R.A."/>
        </authorList>
    </citation>
    <scope>NUCLEOTIDE SEQUENCE [GENOMIC DNA]</scope>
    <scope>FUNCTION</scope>
    <source>
        <strain>AY25</strain>
    </source>
</reference>
<reference key="2">
    <citation type="journal article" date="1996" name="J. Bacteriol.">
        <title>Genetic analysis of plasmid determinants for microcin J25 production and immunity.</title>
        <authorList>
            <person name="Solbiati J.O."/>
            <person name="Ciaccio M."/>
            <person name="Farias R.N."/>
            <person name="Salomon R.A."/>
        </authorList>
    </citation>
    <scope>FUNCTION</scope>
    <source>
        <strain>AY25</strain>
    </source>
</reference>
<dbReference type="EMBL" id="AF061787">
    <property type="protein sequence ID" value="AAD28497.1"/>
    <property type="molecule type" value="Genomic_DNA"/>
</dbReference>
<dbReference type="RefSeq" id="WP_032489485.1">
    <property type="nucleotide sequence ID" value="NZ_NNTP01000056.1"/>
</dbReference>
<dbReference type="PDB" id="4PL0">
    <property type="method" value="X-ray"/>
    <property type="resolution" value="2.70 A"/>
    <property type="chains" value="A/B=1-580"/>
</dbReference>
<dbReference type="PDB" id="5EG1">
    <property type="method" value="X-ray"/>
    <property type="resolution" value="3.42 A"/>
    <property type="chains" value="A/B=1-580"/>
</dbReference>
<dbReference type="PDB" id="5OFP">
    <property type="method" value="X-ray"/>
    <property type="resolution" value="4.71 A"/>
    <property type="chains" value="A=1-580"/>
</dbReference>
<dbReference type="PDB" id="5OFR">
    <property type="method" value="X-ray"/>
    <property type="resolution" value="3.40 A"/>
    <property type="chains" value="A/B=1-580"/>
</dbReference>
<dbReference type="PDB" id="8PX9">
    <property type="method" value="X-ray"/>
    <property type="resolution" value="2.80 A"/>
    <property type="chains" value="A/B=1-580"/>
</dbReference>
<dbReference type="PDBsum" id="4PL0"/>
<dbReference type="PDBsum" id="5EG1"/>
<dbReference type="PDBsum" id="5OFP"/>
<dbReference type="PDBsum" id="5OFR"/>
<dbReference type="PDBsum" id="8PX9"/>
<dbReference type="SMR" id="Q9X2W0"/>
<dbReference type="TCDB" id="3.A.1.118.1">
    <property type="family name" value="the atp-binding cassette (abc) superfamily"/>
</dbReference>
<dbReference type="EvolutionaryTrace" id="Q9X2W0"/>
<dbReference type="GO" id="GO:0005886">
    <property type="term" value="C:plasma membrane"/>
    <property type="evidence" value="ECO:0007669"/>
    <property type="project" value="UniProtKB-SubCell"/>
</dbReference>
<dbReference type="GO" id="GO:0015421">
    <property type="term" value="F:ABC-type oligopeptide transporter activity"/>
    <property type="evidence" value="ECO:0007669"/>
    <property type="project" value="TreeGrafter"/>
</dbReference>
<dbReference type="GO" id="GO:0005524">
    <property type="term" value="F:ATP binding"/>
    <property type="evidence" value="ECO:0007669"/>
    <property type="project" value="UniProtKB-KW"/>
</dbReference>
<dbReference type="GO" id="GO:0016887">
    <property type="term" value="F:ATP hydrolysis activity"/>
    <property type="evidence" value="ECO:0007669"/>
    <property type="project" value="InterPro"/>
</dbReference>
<dbReference type="GO" id="GO:0030153">
    <property type="term" value="P:bacteriocin immunity"/>
    <property type="evidence" value="ECO:0007669"/>
    <property type="project" value="UniProtKB-KW"/>
</dbReference>
<dbReference type="GO" id="GO:0043213">
    <property type="term" value="P:bacteriocin transport"/>
    <property type="evidence" value="ECO:0007669"/>
    <property type="project" value="UniProtKB-KW"/>
</dbReference>
<dbReference type="GO" id="GO:0015031">
    <property type="term" value="P:protein transport"/>
    <property type="evidence" value="ECO:0007669"/>
    <property type="project" value="UniProtKB-KW"/>
</dbReference>
<dbReference type="CDD" id="cd03228">
    <property type="entry name" value="ABCC_MRP_Like"/>
    <property type="match status" value="1"/>
</dbReference>
<dbReference type="Gene3D" id="1.20.1560.10">
    <property type="entry name" value="ABC transporter type 1, transmembrane domain"/>
    <property type="match status" value="1"/>
</dbReference>
<dbReference type="Gene3D" id="3.40.50.300">
    <property type="entry name" value="P-loop containing nucleotide triphosphate hydrolases"/>
    <property type="match status" value="1"/>
</dbReference>
<dbReference type="InterPro" id="IPR003593">
    <property type="entry name" value="AAA+_ATPase"/>
</dbReference>
<dbReference type="InterPro" id="IPR011527">
    <property type="entry name" value="ABC1_TM_dom"/>
</dbReference>
<dbReference type="InterPro" id="IPR036640">
    <property type="entry name" value="ABC1_TM_sf"/>
</dbReference>
<dbReference type="InterPro" id="IPR003439">
    <property type="entry name" value="ABC_transporter-like_ATP-bd"/>
</dbReference>
<dbReference type="InterPro" id="IPR017871">
    <property type="entry name" value="ABC_transporter-like_CS"/>
</dbReference>
<dbReference type="InterPro" id="IPR027417">
    <property type="entry name" value="P-loop_NTPase"/>
</dbReference>
<dbReference type="InterPro" id="IPR039421">
    <property type="entry name" value="Type_1_exporter"/>
</dbReference>
<dbReference type="PANTHER" id="PTHR43394:SF1">
    <property type="entry name" value="ATP-BINDING CASSETTE SUB-FAMILY B MEMBER 10, MITOCHONDRIAL"/>
    <property type="match status" value="1"/>
</dbReference>
<dbReference type="PANTHER" id="PTHR43394">
    <property type="entry name" value="ATP-DEPENDENT PERMEASE MDL1, MITOCHONDRIAL"/>
    <property type="match status" value="1"/>
</dbReference>
<dbReference type="Pfam" id="PF00664">
    <property type="entry name" value="ABC_membrane"/>
    <property type="match status" value="1"/>
</dbReference>
<dbReference type="Pfam" id="PF00005">
    <property type="entry name" value="ABC_tran"/>
    <property type="match status" value="1"/>
</dbReference>
<dbReference type="SMART" id="SM00382">
    <property type="entry name" value="AAA"/>
    <property type="match status" value="1"/>
</dbReference>
<dbReference type="SUPFAM" id="SSF90123">
    <property type="entry name" value="ABC transporter transmembrane region"/>
    <property type="match status" value="1"/>
</dbReference>
<dbReference type="SUPFAM" id="SSF52540">
    <property type="entry name" value="P-loop containing nucleoside triphosphate hydrolases"/>
    <property type="match status" value="1"/>
</dbReference>
<dbReference type="PROSITE" id="PS50929">
    <property type="entry name" value="ABC_TM1F"/>
    <property type="match status" value="1"/>
</dbReference>
<dbReference type="PROSITE" id="PS00211">
    <property type="entry name" value="ABC_TRANSPORTER_1"/>
    <property type="match status" value="1"/>
</dbReference>
<dbReference type="PROSITE" id="PS50893">
    <property type="entry name" value="ABC_TRANSPORTER_2"/>
    <property type="match status" value="1"/>
</dbReference>